<accession>O25664</accession>
<dbReference type="EC" id="2.7.7.60" evidence="1"/>
<dbReference type="EC" id="4.6.1.12" evidence="1"/>
<dbReference type="EMBL" id="AE000511">
    <property type="protein sequence ID" value="AAD08064.1"/>
    <property type="molecule type" value="Genomic_DNA"/>
</dbReference>
<dbReference type="PIR" id="D64647">
    <property type="entry name" value="D64647"/>
</dbReference>
<dbReference type="RefSeq" id="NP_207810.1">
    <property type="nucleotide sequence ID" value="NC_000915.1"/>
</dbReference>
<dbReference type="RefSeq" id="WP_000052931.1">
    <property type="nucleotide sequence ID" value="NC_018939.1"/>
</dbReference>
<dbReference type="PDB" id="8XHU">
    <property type="method" value="X-ray"/>
    <property type="resolution" value="2.40 A"/>
    <property type="chains" value="A/B/C=33-406"/>
</dbReference>
<dbReference type="PDB" id="8XKF">
    <property type="method" value="X-ray"/>
    <property type="resolution" value="2.50 A"/>
    <property type="chains" value="A/B/C/D/E/F=33-406"/>
</dbReference>
<dbReference type="PDBsum" id="8XHU"/>
<dbReference type="PDBsum" id="8XKF"/>
<dbReference type="SMR" id="O25664"/>
<dbReference type="IntAct" id="O25664">
    <property type="interactions" value="10"/>
</dbReference>
<dbReference type="STRING" id="85962.HP_1020"/>
<dbReference type="PaxDb" id="85962-C694_05275"/>
<dbReference type="EnsemblBacteria" id="AAD08064">
    <property type="protein sequence ID" value="AAD08064"/>
    <property type="gene ID" value="HP_1020"/>
</dbReference>
<dbReference type="KEGG" id="heo:C694_05275"/>
<dbReference type="KEGG" id="hpy:HP_1020"/>
<dbReference type="PATRIC" id="fig|85962.47.peg.1098"/>
<dbReference type="eggNOG" id="COG0245">
    <property type="taxonomic scope" value="Bacteria"/>
</dbReference>
<dbReference type="eggNOG" id="COG1211">
    <property type="taxonomic scope" value="Bacteria"/>
</dbReference>
<dbReference type="InParanoid" id="O25664"/>
<dbReference type="OrthoDB" id="9804336at2"/>
<dbReference type="PhylomeDB" id="O25664"/>
<dbReference type="UniPathway" id="UPA00056">
    <property type="reaction ID" value="UER00093"/>
</dbReference>
<dbReference type="UniPathway" id="UPA00056">
    <property type="reaction ID" value="UER00095"/>
</dbReference>
<dbReference type="Proteomes" id="UP000000429">
    <property type="component" value="Chromosome"/>
</dbReference>
<dbReference type="GO" id="GO:0008685">
    <property type="term" value="F:2-C-methyl-D-erythritol 2,4-cyclodiphosphate synthase activity"/>
    <property type="evidence" value="ECO:0000318"/>
    <property type="project" value="GO_Central"/>
</dbReference>
<dbReference type="GO" id="GO:0050518">
    <property type="term" value="F:2-C-methyl-D-erythritol 4-phosphate cytidylyltransferase activity"/>
    <property type="evidence" value="ECO:0007669"/>
    <property type="project" value="UniProtKB-UniRule"/>
</dbReference>
<dbReference type="GO" id="GO:0046872">
    <property type="term" value="F:metal ion binding"/>
    <property type="evidence" value="ECO:0007669"/>
    <property type="project" value="UniProtKB-KW"/>
</dbReference>
<dbReference type="GO" id="GO:0019288">
    <property type="term" value="P:isopentenyl diphosphate biosynthetic process, methylerythritol 4-phosphate pathway"/>
    <property type="evidence" value="ECO:0007669"/>
    <property type="project" value="UniProtKB-UniRule"/>
</dbReference>
<dbReference type="GO" id="GO:0016114">
    <property type="term" value="P:terpenoid biosynthetic process"/>
    <property type="evidence" value="ECO:0007669"/>
    <property type="project" value="InterPro"/>
</dbReference>
<dbReference type="CDD" id="cd02516">
    <property type="entry name" value="CDP-ME_synthetase"/>
    <property type="match status" value="1"/>
</dbReference>
<dbReference type="CDD" id="cd00554">
    <property type="entry name" value="MECDP_synthase"/>
    <property type="match status" value="1"/>
</dbReference>
<dbReference type="FunFam" id="3.30.1330.50:FF:000005">
    <property type="entry name" value="Bifunctional enzyme IspD/IspF"/>
    <property type="match status" value="1"/>
</dbReference>
<dbReference type="FunFam" id="3.90.550.10:FF:000259">
    <property type="entry name" value="Bifunctional enzyme IspD/IspF"/>
    <property type="match status" value="1"/>
</dbReference>
<dbReference type="Gene3D" id="3.30.1330.50">
    <property type="entry name" value="2-C-methyl-D-erythritol 2,4-cyclodiphosphate synthase"/>
    <property type="match status" value="1"/>
</dbReference>
<dbReference type="Gene3D" id="3.90.550.10">
    <property type="entry name" value="Spore Coat Polysaccharide Biosynthesis Protein SpsA, Chain A"/>
    <property type="match status" value="1"/>
</dbReference>
<dbReference type="HAMAP" id="MF_01520">
    <property type="entry name" value="IspDF"/>
    <property type="match status" value="1"/>
</dbReference>
<dbReference type="HAMAP" id="MF_00107">
    <property type="entry name" value="IspF"/>
    <property type="match status" value="1"/>
</dbReference>
<dbReference type="InterPro" id="IPR001228">
    <property type="entry name" value="IspD"/>
</dbReference>
<dbReference type="InterPro" id="IPR026596">
    <property type="entry name" value="IspD/F"/>
</dbReference>
<dbReference type="InterPro" id="IPR034683">
    <property type="entry name" value="IspD/TarI"/>
</dbReference>
<dbReference type="InterPro" id="IPR018294">
    <property type="entry name" value="ISPD_synthase_CS"/>
</dbReference>
<dbReference type="InterPro" id="IPR003526">
    <property type="entry name" value="MECDP_synthase"/>
</dbReference>
<dbReference type="InterPro" id="IPR020555">
    <property type="entry name" value="MECDP_synthase_CS"/>
</dbReference>
<dbReference type="InterPro" id="IPR036571">
    <property type="entry name" value="MECDP_synthase_sf"/>
</dbReference>
<dbReference type="InterPro" id="IPR029044">
    <property type="entry name" value="Nucleotide-diphossugar_trans"/>
</dbReference>
<dbReference type="NCBIfam" id="TIGR00453">
    <property type="entry name" value="ispD"/>
    <property type="match status" value="1"/>
</dbReference>
<dbReference type="NCBIfam" id="TIGR00151">
    <property type="entry name" value="ispF"/>
    <property type="match status" value="1"/>
</dbReference>
<dbReference type="NCBIfam" id="NF006899">
    <property type="entry name" value="PRK09382.1"/>
    <property type="match status" value="1"/>
</dbReference>
<dbReference type="PANTHER" id="PTHR43181">
    <property type="entry name" value="2-C-METHYL-D-ERYTHRITOL 2,4-CYCLODIPHOSPHATE SYNTHASE, CHLOROPLASTIC"/>
    <property type="match status" value="1"/>
</dbReference>
<dbReference type="PANTHER" id="PTHR43181:SF1">
    <property type="entry name" value="2-C-METHYL-D-ERYTHRITOL 2,4-CYCLODIPHOSPHATE SYNTHASE, CHLOROPLASTIC"/>
    <property type="match status" value="1"/>
</dbReference>
<dbReference type="Pfam" id="PF01128">
    <property type="entry name" value="IspD"/>
    <property type="match status" value="1"/>
</dbReference>
<dbReference type="Pfam" id="PF02542">
    <property type="entry name" value="YgbB"/>
    <property type="match status" value="1"/>
</dbReference>
<dbReference type="SUPFAM" id="SSF69765">
    <property type="entry name" value="IpsF-like"/>
    <property type="match status" value="1"/>
</dbReference>
<dbReference type="SUPFAM" id="SSF53448">
    <property type="entry name" value="Nucleotide-diphospho-sugar transferases"/>
    <property type="match status" value="1"/>
</dbReference>
<dbReference type="PROSITE" id="PS01295">
    <property type="entry name" value="ISPD"/>
    <property type="match status" value="1"/>
</dbReference>
<dbReference type="PROSITE" id="PS01350">
    <property type="entry name" value="ISPF"/>
    <property type="match status" value="1"/>
</dbReference>
<proteinExistence type="evidence at protein level"/>
<gene>
    <name evidence="1" type="primary">ispDF</name>
    <name type="ordered locus">HP_1020</name>
</gene>
<comment type="function">
    <text evidence="1">Bifunctional enzyme that catalyzes the formation of 4-diphosphocytidyl-2-C-methyl-D-erythritol from CTP and 2-C-methyl-D-erythritol 4-phosphate (MEP) (IspD), and catalyzes the conversion of 4-diphosphocytidyl-2-C-methyl-D-erythritol 2-phosphate (CDP-ME2P) to 2-C-methyl-D-erythritol 2,4-cyclodiphosphate (ME-CPP) with a corresponding release of cytidine 5-monophosphate (CMP) (IspF).</text>
</comment>
<comment type="catalytic activity">
    <reaction evidence="1">
        <text>2-C-methyl-D-erythritol 4-phosphate + CTP + H(+) = 4-CDP-2-C-methyl-D-erythritol + diphosphate</text>
        <dbReference type="Rhea" id="RHEA:13429"/>
        <dbReference type="ChEBI" id="CHEBI:15378"/>
        <dbReference type="ChEBI" id="CHEBI:33019"/>
        <dbReference type="ChEBI" id="CHEBI:37563"/>
        <dbReference type="ChEBI" id="CHEBI:57823"/>
        <dbReference type="ChEBI" id="CHEBI:58262"/>
        <dbReference type="EC" id="2.7.7.60"/>
    </reaction>
</comment>
<comment type="catalytic activity">
    <reaction evidence="1">
        <text>4-CDP-2-C-methyl-D-erythritol 2-phosphate = 2-C-methyl-D-erythritol 2,4-cyclic diphosphate + CMP</text>
        <dbReference type="Rhea" id="RHEA:23864"/>
        <dbReference type="ChEBI" id="CHEBI:57919"/>
        <dbReference type="ChEBI" id="CHEBI:58483"/>
        <dbReference type="ChEBI" id="CHEBI:60377"/>
        <dbReference type="EC" id="4.6.1.12"/>
    </reaction>
</comment>
<comment type="cofactor">
    <cofactor evidence="1">
        <name>a divalent metal cation</name>
        <dbReference type="ChEBI" id="CHEBI:60240"/>
    </cofactor>
</comment>
<comment type="pathway">
    <text evidence="1">Isoprenoid biosynthesis; isopentenyl diphosphate biosynthesis via DXP pathway; isopentenyl diphosphate from 1-deoxy-D-xylulose 5-phosphate: step 2/6.</text>
</comment>
<comment type="pathway">
    <text evidence="1">Isoprenoid biosynthesis; isopentenyl diphosphate biosynthesis via DXP pathway; isopentenyl diphosphate from 1-deoxy-D-xylulose 5-phosphate: step 4/6.</text>
</comment>
<comment type="similarity">
    <text evidence="1">In the N-terminal section; belongs to the IspD/TarI cytidylyltransferase family. IspD subfamily.</text>
</comment>
<comment type="similarity">
    <text evidence="1">In the C-terminal section; belongs to the IspF family.</text>
</comment>
<sequence>MSLIRVNGEAFKLSLESLEEDPFETKETLETLIKQTSVVLLAAGESRRFSQTIKKQWLRSNHTPLWLSVYESFKEALDFKEIILVVSELDYIYIKRHYPEIKLVKGGASRQESVRNALKIIDSAYTLTSDVARGLANIEALKNLFLTLQQTSHYCIAPYLPCYDTAIYYNEALDREAIKLIQTPQLSHTKALQSALNQGDFKDESSAILQAFPDRVSYIEGSKDLHKLTTSGDLKHFTLFFNPAKDTFIGMGFDTHAFIKDKPMVLGGVVLDCEFGLKAHSDGDALLHAVIDAILGAIKGGDIGEWFPDNDPKYKNASSKELLKIVLDFSQSIGFELFEMGATIFSEIPKITPYKPAILENLSQLLGLEKSQISLKATTMEKMGFIGKQEGLLVQAHVSMRYKQKL</sequence>
<evidence type="ECO:0000255" key="1">
    <source>
        <dbReference type="HAMAP-Rule" id="MF_01520"/>
    </source>
</evidence>
<evidence type="ECO:0007829" key="2">
    <source>
        <dbReference type="PDB" id="8XHU"/>
    </source>
</evidence>
<evidence type="ECO:0007829" key="3">
    <source>
        <dbReference type="PDB" id="8XKF"/>
    </source>
</evidence>
<organism>
    <name type="scientific">Helicobacter pylori (strain ATCC 700392 / 26695)</name>
    <name type="common">Campylobacter pylori</name>
    <dbReference type="NCBI Taxonomy" id="85962"/>
    <lineage>
        <taxon>Bacteria</taxon>
        <taxon>Pseudomonadati</taxon>
        <taxon>Campylobacterota</taxon>
        <taxon>Epsilonproteobacteria</taxon>
        <taxon>Campylobacterales</taxon>
        <taxon>Helicobacteraceae</taxon>
        <taxon>Helicobacter</taxon>
    </lineage>
</organism>
<protein>
    <recommendedName>
        <fullName evidence="1">Bifunctional enzyme IspD/IspF</fullName>
    </recommendedName>
    <domain>
        <recommendedName>
            <fullName evidence="1">2-C-methyl-D-erythritol 4-phosphate cytidylyltransferase</fullName>
            <ecNumber evidence="1">2.7.7.60</ecNumber>
        </recommendedName>
        <alternativeName>
            <fullName evidence="1">4-diphosphocytidyl-2C-methyl-D-erythritol synthase</fullName>
        </alternativeName>
        <alternativeName>
            <fullName evidence="1">MEP cytidylyltransferase</fullName>
            <shortName evidence="1">MCT</shortName>
        </alternativeName>
    </domain>
    <domain>
        <recommendedName>
            <fullName evidence="1">2-C-methyl-D-erythritol 2,4-cyclodiphosphate synthase</fullName>
            <shortName evidence="1">MECDP-synthase</shortName>
            <shortName evidence="1">MECPP-synthase</shortName>
            <shortName evidence="1">MECPS</shortName>
            <ecNumber evidence="1">4.6.1.12</ecNumber>
        </recommendedName>
    </domain>
</protein>
<keyword id="KW-0002">3D-structure</keyword>
<keyword id="KW-0414">Isoprene biosynthesis</keyword>
<keyword id="KW-0456">Lyase</keyword>
<keyword id="KW-0479">Metal-binding</keyword>
<keyword id="KW-0511">Multifunctional enzyme</keyword>
<keyword id="KW-0548">Nucleotidyltransferase</keyword>
<keyword id="KW-1185">Reference proteome</keyword>
<keyword id="KW-0808">Transferase</keyword>
<reference key="1">
    <citation type="journal article" date="1997" name="Nature">
        <title>The complete genome sequence of the gastric pathogen Helicobacter pylori.</title>
        <authorList>
            <person name="Tomb J.-F."/>
            <person name="White O."/>
            <person name="Kerlavage A.R."/>
            <person name="Clayton R.A."/>
            <person name="Sutton G.G."/>
            <person name="Fleischmann R.D."/>
            <person name="Ketchum K.A."/>
            <person name="Klenk H.-P."/>
            <person name="Gill S.R."/>
            <person name="Dougherty B.A."/>
            <person name="Nelson K.E."/>
            <person name="Quackenbush J."/>
            <person name="Zhou L."/>
            <person name="Kirkness E.F."/>
            <person name="Peterson S.N."/>
            <person name="Loftus B.J."/>
            <person name="Richardson D.L."/>
            <person name="Dodson R.J."/>
            <person name="Khalak H.G."/>
            <person name="Glodek A."/>
            <person name="McKenney K."/>
            <person name="FitzGerald L.M."/>
            <person name="Lee N."/>
            <person name="Adams M.D."/>
            <person name="Hickey E.K."/>
            <person name="Berg D.E."/>
            <person name="Gocayne J.D."/>
            <person name="Utterback T.R."/>
            <person name="Peterson J.D."/>
            <person name="Kelley J.M."/>
            <person name="Cotton M.D."/>
            <person name="Weidman J.F."/>
            <person name="Fujii C."/>
            <person name="Bowman C."/>
            <person name="Watthey L."/>
            <person name="Wallin E."/>
            <person name="Hayes W.S."/>
            <person name="Borodovsky M."/>
            <person name="Karp P.D."/>
            <person name="Smith H.O."/>
            <person name="Fraser C.M."/>
            <person name="Venter J.C."/>
        </authorList>
    </citation>
    <scope>NUCLEOTIDE SEQUENCE [LARGE SCALE GENOMIC DNA]</scope>
    <source>
        <strain>ATCC 700392 / 26695</strain>
    </source>
</reference>
<feature type="chain" id="PRO_0000075669" description="Bifunctional enzyme IspD/IspF">
    <location>
        <begin position="1"/>
        <end position="406"/>
    </location>
</feature>
<feature type="region of interest" description="2-C-methyl-D-erythritol 4-phosphate cytidylyltransferase" evidence="1">
    <location>
        <begin position="1"/>
        <end position="247"/>
    </location>
</feature>
<feature type="region of interest" description="2-C-methyl-D-erythritol 2,4-cyclodiphosphate synthase" evidence="1">
    <location>
        <begin position="248"/>
        <end position="406"/>
    </location>
</feature>
<feature type="binding site" evidence="1">
    <location>
        <begin position="254"/>
        <end position="256"/>
    </location>
    <ligand>
        <name>4-CDP-2-C-methyl-D-erythritol 2-phosphate</name>
        <dbReference type="ChEBI" id="CHEBI:57919"/>
    </ligand>
</feature>
<feature type="binding site" evidence="1">
    <location>
        <position position="254"/>
    </location>
    <ligand>
        <name>a divalent metal cation</name>
        <dbReference type="ChEBI" id="CHEBI:60240"/>
    </ligand>
</feature>
<feature type="binding site" evidence="1">
    <location>
        <position position="256"/>
    </location>
    <ligand>
        <name>a divalent metal cation</name>
        <dbReference type="ChEBI" id="CHEBI:60240"/>
    </ligand>
</feature>
<feature type="binding site" evidence="1">
    <location>
        <begin position="280"/>
        <end position="281"/>
    </location>
    <ligand>
        <name>4-CDP-2-C-methyl-D-erythritol 2-phosphate</name>
        <dbReference type="ChEBI" id="CHEBI:57919"/>
    </ligand>
</feature>
<feature type="binding site" evidence="1">
    <location>
        <position position="288"/>
    </location>
    <ligand>
        <name>a divalent metal cation</name>
        <dbReference type="ChEBI" id="CHEBI:60240"/>
    </ligand>
</feature>
<feature type="binding site" evidence="1">
    <location>
        <begin position="302"/>
        <end position="304"/>
    </location>
    <ligand>
        <name>4-CDP-2-C-methyl-D-erythritol 2-phosphate</name>
        <dbReference type="ChEBI" id="CHEBI:57919"/>
    </ligand>
</feature>
<feature type="binding site" evidence="1">
    <location>
        <begin position="307"/>
        <end position="311"/>
    </location>
    <ligand>
        <name>4-CDP-2-C-methyl-D-erythritol 2-phosphate</name>
        <dbReference type="ChEBI" id="CHEBI:57919"/>
    </ligand>
</feature>
<feature type="binding site" evidence="1">
    <location>
        <begin position="378"/>
        <end position="381"/>
    </location>
    <ligand>
        <name>4-CDP-2-C-methyl-D-erythritol 2-phosphate</name>
        <dbReference type="ChEBI" id="CHEBI:57919"/>
    </ligand>
</feature>
<feature type="binding site" evidence="1">
    <location>
        <position position="385"/>
    </location>
    <ligand>
        <name>4-CDP-2-C-methyl-D-erythritol 2-phosphate</name>
        <dbReference type="ChEBI" id="CHEBI:57919"/>
    </ligand>
</feature>
<feature type="binding site" evidence="1">
    <location>
        <position position="388"/>
    </location>
    <ligand>
        <name>4-CDP-2-C-methyl-D-erythritol 2-phosphate</name>
        <dbReference type="ChEBI" id="CHEBI:57919"/>
    </ligand>
</feature>
<feature type="site" description="Transition state stabilizer" evidence="1">
    <location>
        <position position="48"/>
    </location>
</feature>
<feature type="site" description="Transition state stabilizer" evidence="1">
    <location>
        <position position="55"/>
    </location>
</feature>
<feature type="site" description="Positions MEP for the nucleophilic attack" evidence="1">
    <location>
        <position position="175"/>
    </location>
</feature>
<feature type="site" description="Positions MEP for the nucleophilic attack" evidence="1">
    <location>
        <position position="227"/>
    </location>
</feature>
<feature type="site" description="Transition state stabilizer" evidence="1">
    <location>
        <position position="280"/>
    </location>
</feature>
<feature type="site" description="Transition state stabilizer" evidence="1">
    <location>
        <position position="379"/>
    </location>
</feature>
<feature type="helix" evidence="2">
    <location>
        <begin position="33"/>
        <end position="35"/>
    </location>
</feature>
<feature type="strand" evidence="2">
    <location>
        <begin position="36"/>
        <end position="42"/>
    </location>
</feature>
<feature type="turn" evidence="3">
    <location>
        <begin position="47"/>
        <end position="49"/>
    </location>
</feature>
<feature type="strand" evidence="3">
    <location>
        <begin position="51"/>
        <end position="53"/>
    </location>
</feature>
<feature type="helix" evidence="2">
    <location>
        <begin position="55"/>
        <end position="57"/>
    </location>
</feature>
<feature type="strand" evidence="2">
    <location>
        <begin position="59"/>
        <end position="61"/>
    </location>
</feature>
<feature type="helix" evidence="2">
    <location>
        <begin position="65"/>
        <end position="76"/>
    </location>
</feature>
<feature type="strand" evidence="2">
    <location>
        <begin position="80"/>
        <end position="86"/>
    </location>
</feature>
<feature type="helix" evidence="2">
    <location>
        <begin position="88"/>
        <end position="97"/>
    </location>
</feature>
<feature type="strand" evidence="2">
    <location>
        <begin position="101"/>
        <end position="105"/>
    </location>
</feature>
<feature type="helix" evidence="2">
    <location>
        <begin position="110"/>
        <end position="118"/>
    </location>
</feature>
<feature type="strand" evidence="2">
    <location>
        <begin position="123"/>
        <end position="130"/>
    </location>
</feature>
<feature type="helix" evidence="2">
    <location>
        <begin position="131"/>
        <end position="133"/>
    </location>
</feature>
<feature type="helix" evidence="2">
    <location>
        <begin position="138"/>
        <end position="151"/>
    </location>
</feature>
<feature type="strand" evidence="2">
    <location>
        <begin position="154"/>
        <end position="161"/>
    </location>
</feature>
<feature type="strand" evidence="3">
    <location>
        <begin position="166"/>
        <end position="170"/>
    </location>
</feature>
<feature type="helix" evidence="2">
    <location>
        <begin position="175"/>
        <end position="177"/>
    </location>
</feature>
<feature type="strand" evidence="2">
    <location>
        <begin position="179"/>
        <end position="181"/>
    </location>
</feature>
<feature type="strand" evidence="2">
    <location>
        <begin position="185"/>
        <end position="188"/>
    </location>
</feature>
<feature type="helix" evidence="2">
    <location>
        <begin position="189"/>
        <end position="195"/>
    </location>
</feature>
<feature type="helix" evidence="2">
    <location>
        <begin position="204"/>
        <end position="211"/>
    </location>
</feature>
<feature type="strand" evidence="2">
    <location>
        <begin position="215"/>
        <end position="220"/>
    </location>
</feature>
<feature type="strand" evidence="2">
    <location>
        <begin position="247"/>
        <end position="260"/>
    </location>
</feature>
<feature type="strand" evidence="2">
    <location>
        <begin position="264"/>
        <end position="266"/>
    </location>
</feature>
<feature type="strand" evidence="2">
    <location>
        <begin position="269"/>
        <end position="271"/>
    </location>
</feature>
<feature type="strand" evidence="2">
    <location>
        <begin position="274"/>
        <end position="277"/>
    </location>
</feature>
<feature type="strand" evidence="2">
    <location>
        <begin position="279"/>
        <end position="282"/>
    </location>
</feature>
<feature type="helix" evidence="2">
    <location>
        <begin position="285"/>
        <end position="298"/>
    </location>
</feature>
<feature type="helix" evidence="2">
    <location>
        <begin position="303"/>
        <end position="306"/>
    </location>
</feature>
<feature type="helix" evidence="2">
    <location>
        <begin position="312"/>
        <end position="314"/>
    </location>
</feature>
<feature type="helix" evidence="2">
    <location>
        <begin position="319"/>
        <end position="332"/>
    </location>
</feature>
<feature type="strand" evidence="2">
    <location>
        <begin position="335"/>
        <end position="345"/>
    </location>
</feature>
<feature type="strand" evidence="2">
    <location>
        <begin position="347"/>
        <end position="349"/>
    </location>
</feature>
<feature type="helix" evidence="2">
    <location>
        <begin position="352"/>
        <end position="354"/>
    </location>
</feature>
<feature type="helix" evidence="2">
    <location>
        <begin position="355"/>
        <end position="366"/>
    </location>
</feature>
<feature type="helix" evidence="2">
    <location>
        <begin position="370"/>
        <end position="372"/>
    </location>
</feature>
<feature type="strand" evidence="2">
    <location>
        <begin position="373"/>
        <end position="378"/>
    </location>
</feature>
<feature type="helix" evidence="2">
    <location>
        <begin position="384"/>
        <end position="387"/>
    </location>
</feature>
<feature type="strand" evidence="2">
    <location>
        <begin position="390"/>
        <end position="402"/>
    </location>
</feature>
<name>ISPDF_HELPY</name>